<reference key="1">
    <citation type="journal article" date="2002" name="Lancet">
        <title>Genome and virulence determinants of high virulence community-acquired MRSA.</title>
        <authorList>
            <person name="Baba T."/>
            <person name="Takeuchi F."/>
            <person name="Kuroda M."/>
            <person name="Yuzawa H."/>
            <person name="Aoki K."/>
            <person name="Oguchi A."/>
            <person name="Nagai Y."/>
            <person name="Iwama N."/>
            <person name="Asano K."/>
            <person name="Naimi T."/>
            <person name="Kuroda H."/>
            <person name="Cui L."/>
            <person name="Yamamoto K."/>
            <person name="Hiramatsu K."/>
        </authorList>
    </citation>
    <scope>NUCLEOTIDE SEQUENCE [LARGE SCALE GENOMIC DNA]</scope>
    <source>
        <strain>MW2</strain>
    </source>
</reference>
<organism>
    <name type="scientific">Staphylococcus aureus (strain MW2)</name>
    <dbReference type="NCBI Taxonomy" id="196620"/>
    <lineage>
        <taxon>Bacteria</taxon>
        <taxon>Bacillati</taxon>
        <taxon>Bacillota</taxon>
        <taxon>Bacilli</taxon>
        <taxon>Bacillales</taxon>
        <taxon>Staphylococcaceae</taxon>
        <taxon>Staphylococcus</taxon>
    </lineage>
</organism>
<comment type="catalytic activity">
    <reaction evidence="1">
        <text>(S)-malate + a quinone = a quinol + oxaloacetate</text>
        <dbReference type="Rhea" id="RHEA:46012"/>
        <dbReference type="ChEBI" id="CHEBI:15589"/>
        <dbReference type="ChEBI" id="CHEBI:16452"/>
        <dbReference type="ChEBI" id="CHEBI:24646"/>
        <dbReference type="ChEBI" id="CHEBI:132124"/>
        <dbReference type="EC" id="1.1.5.4"/>
    </reaction>
</comment>
<comment type="cofactor">
    <cofactor evidence="1">
        <name>FAD</name>
        <dbReference type="ChEBI" id="CHEBI:57692"/>
    </cofactor>
</comment>
<comment type="pathway">
    <text evidence="1">Carbohydrate metabolism; tricarboxylic acid cycle; oxaloacetate from (S)-malate (quinone route): step 1/1.</text>
</comment>
<comment type="similarity">
    <text evidence="1">Belongs to the MQO family.</text>
</comment>
<proteinExistence type="inferred from homology"/>
<accession>Q8NUM4</accession>
<evidence type="ECO:0000255" key="1">
    <source>
        <dbReference type="HAMAP-Rule" id="MF_00212"/>
    </source>
</evidence>
<dbReference type="EC" id="1.1.5.4" evidence="1"/>
<dbReference type="EMBL" id="BA000033">
    <property type="protein sequence ID" value="BAB96391.1"/>
    <property type="molecule type" value="Genomic_DNA"/>
</dbReference>
<dbReference type="RefSeq" id="WP_001130054.1">
    <property type="nucleotide sequence ID" value="NC_003923.1"/>
</dbReference>
<dbReference type="SMR" id="Q8NUM4"/>
<dbReference type="KEGG" id="sam:MW2526"/>
<dbReference type="HOGENOM" id="CLU_028151_0_0_9"/>
<dbReference type="UniPathway" id="UPA00223">
    <property type="reaction ID" value="UER01008"/>
</dbReference>
<dbReference type="GO" id="GO:0047545">
    <property type="term" value="F:2-hydroxyglutarate dehydrogenase activity"/>
    <property type="evidence" value="ECO:0007669"/>
    <property type="project" value="TreeGrafter"/>
</dbReference>
<dbReference type="GO" id="GO:0008924">
    <property type="term" value="F:L-malate dehydrogenase (quinone) activity"/>
    <property type="evidence" value="ECO:0007669"/>
    <property type="project" value="UniProtKB-UniRule"/>
</dbReference>
<dbReference type="GO" id="GO:0006099">
    <property type="term" value="P:tricarboxylic acid cycle"/>
    <property type="evidence" value="ECO:0007669"/>
    <property type="project" value="UniProtKB-UniRule"/>
</dbReference>
<dbReference type="Gene3D" id="3.30.9.10">
    <property type="entry name" value="D-Amino Acid Oxidase, subunit A, domain 2"/>
    <property type="match status" value="1"/>
</dbReference>
<dbReference type="Gene3D" id="3.50.50.60">
    <property type="entry name" value="FAD/NAD(P)-binding domain"/>
    <property type="match status" value="1"/>
</dbReference>
<dbReference type="HAMAP" id="MF_00212">
    <property type="entry name" value="MQO"/>
    <property type="match status" value="1"/>
</dbReference>
<dbReference type="InterPro" id="IPR036188">
    <property type="entry name" value="FAD/NAD-bd_sf"/>
</dbReference>
<dbReference type="InterPro" id="IPR006231">
    <property type="entry name" value="MQO"/>
</dbReference>
<dbReference type="NCBIfam" id="NF040844">
    <property type="entry name" value="Lac_Quin_Ox_NO"/>
    <property type="match status" value="1"/>
</dbReference>
<dbReference type="NCBIfam" id="TIGR01320">
    <property type="entry name" value="mal_quin_oxido"/>
    <property type="match status" value="1"/>
</dbReference>
<dbReference type="NCBIfam" id="NF003606">
    <property type="entry name" value="PRK05257.2-1"/>
    <property type="match status" value="1"/>
</dbReference>
<dbReference type="NCBIfam" id="NF003611">
    <property type="entry name" value="PRK05257.3-2"/>
    <property type="match status" value="1"/>
</dbReference>
<dbReference type="NCBIfam" id="NF009875">
    <property type="entry name" value="PRK13339.1"/>
    <property type="match status" value="1"/>
</dbReference>
<dbReference type="PANTHER" id="PTHR43104">
    <property type="entry name" value="L-2-HYDROXYGLUTARATE DEHYDROGENASE, MITOCHONDRIAL"/>
    <property type="match status" value="1"/>
</dbReference>
<dbReference type="PANTHER" id="PTHR43104:SF2">
    <property type="entry name" value="L-2-HYDROXYGLUTARATE DEHYDROGENASE, MITOCHONDRIAL"/>
    <property type="match status" value="1"/>
</dbReference>
<dbReference type="Pfam" id="PF06039">
    <property type="entry name" value="Mqo"/>
    <property type="match status" value="1"/>
</dbReference>
<dbReference type="SUPFAM" id="SSF51905">
    <property type="entry name" value="FAD/NAD(P)-binding domain"/>
    <property type="match status" value="1"/>
</dbReference>
<keyword id="KW-0274">FAD</keyword>
<keyword id="KW-0285">Flavoprotein</keyword>
<keyword id="KW-0560">Oxidoreductase</keyword>
<keyword id="KW-0816">Tricarboxylic acid cycle</keyword>
<gene>
    <name evidence="1" type="primary">mqo2</name>
    <name type="ordered locus">MW2526</name>
</gene>
<name>MQO2_STAAW</name>
<sequence length="498" mass="55927">MAKSNSKDIVLIGAGVLSTTFGSMLKEIEPDWNIHVYERLDRPAIESSNERNNAGTGHAALCELNYTVLQPDGSIDIEKAKVINEEFEISKQFWGHLVKSGSIENPRGFINPLPHISYVRGKNNVKFLKDRYEAMKAFPMFDNIEYTEDIEVMKKWIPLMMKGREDNPGIMAASKIDEGTDVNFGELTRKMAKSIEAHPNATVQFNHEVVDFEQLSNGQWEVTVKNRLTGEKFKQVTDYVFIGAGGGAIPLLQKTGIPESKHLGGFPISGQFLACTNPQVIEQHDAKVYGKEPPGTPPMTVPHLDTRYIDGQRTLLFGPFANVGPKFLKNGSNLDLFKSVKTYNITTLLAAAVKNLPLIKYSFDQVIMTKEGCMNHLRTFYPEARNEDWQLYTAGKRVQVIKDTPEHGKGFIQFGTEVVNSQDHTVIALLGESPGASTSVSVALEVLERNFPEYKTEWAPKIKKMIPSYGESLIEDEKLMRKIRKQTSKDLELGYYEN</sequence>
<protein>
    <recommendedName>
        <fullName evidence="1">Probable malate:quinone oxidoreductase 2</fullName>
        <ecNumber evidence="1">1.1.5.4</ecNumber>
    </recommendedName>
    <alternativeName>
        <fullName evidence="1">MQO 2</fullName>
    </alternativeName>
    <alternativeName>
        <fullName evidence="1">Malate dehydrogenase [quinone] 2</fullName>
    </alternativeName>
</protein>
<feature type="chain" id="PRO_0000128748" description="Probable malate:quinone oxidoreductase 2">
    <location>
        <begin position="1"/>
        <end position="498"/>
    </location>
</feature>